<name>RF3_LIGS1</name>
<reference key="1">
    <citation type="journal article" date="2006" name="Proc. Natl. Acad. Sci. U.S.A.">
        <title>Multireplicon genome architecture of Lactobacillus salivarius.</title>
        <authorList>
            <person name="Claesson M.J."/>
            <person name="Li Y."/>
            <person name="Leahy S."/>
            <person name="Canchaya C."/>
            <person name="van Pijkeren J.P."/>
            <person name="Cerdeno-Tarraga A.M."/>
            <person name="Parkhill J."/>
            <person name="Flynn S."/>
            <person name="O'Sullivan G.C."/>
            <person name="Collins J.K."/>
            <person name="Higgins D."/>
            <person name="Shanahan F."/>
            <person name="Fitzgerald G.F."/>
            <person name="van Sinderen D."/>
            <person name="O'Toole P.W."/>
        </authorList>
    </citation>
    <scope>NUCLEOTIDE SEQUENCE [LARGE SCALE GENOMIC DNA]</scope>
    <source>
        <strain>UCC118</strain>
    </source>
</reference>
<feature type="chain" id="PRO_1000023658" description="Peptide chain release factor 3">
    <location>
        <begin position="1"/>
        <end position="525"/>
    </location>
</feature>
<feature type="domain" description="tr-type G">
    <location>
        <begin position="11"/>
        <end position="279"/>
    </location>
</feature>
<feature type="binding site" evidence="1">
    <location>
        <begin position="20"/>
        <end position="27"/>
    </location>
    <ligand>
        <name>GTP</name>
        <dbReference type="ChEBI" id="CHEBI:37565"/>
    </ligand>
</feature>
<feature type="binding site" evidence="1">
    <location>
        <begin position="88"/>
        <end position="92"/>
    </location>
    <ligand>
        <name>GTP</name>
        <dbReference type="ChEBI" id="CHEBI:37565"/>
    </ligand>
</feature>
<feature type="binding site" evidence="1">
    <location>
        <begin position="142"/>
        <end position="145"/>
    </location>
    <ligand>
        <name>GTP</name>
        <dbReference type="ChEBI" id="CHEBI:37565"/>
    </ligand>
</feature>
<evidence type="ECO:0000255" key="1">
    <source>
        <dbReference type="HAMAP-Rule" id="MF_00072"/>
    </source>
</evidence>
<protein>
    <recommendedName>
        <fullName evidence="1">Peptide chain release factor 3</fullName>
        <shortName evidence="1">RF-3</shortName>
    </recommendedName>
</protein>
<proteinExistence type="inferred from homology"/>
<comment type="function">
    <text evidence="1">Increases the formation of ribosomal termination complexes and stimulates activities of RF-1 and RF-2. It binds guanine nucleotides and has strong preference for UGA stop codons. It may interact directly with the ribosome. The stimulation of RF-1 and RF-2 is significantly reduced by GTP and GDP, but not by GMP.</text>
</comment>
<comment type="subcellular location">
    <subcellularLocation>
        <location evidence="1">Cytoplasm</location>
    </subcellularLocation>
</comment>
<comment type="similarity">
    <text evidence="1">Belongs to the TRAFAC class translation factor GTPase superfamily. Classic translation factor GTPase family. PrfC subfamily.</text>
</comment>
<keyword id="KW-0963">Cytoplasm</keyword>
<keyword id="KW-0342">GTP-binding</keyword>
<keyword id="KW-0547">Nucleotide-binding</keyword>
<keyword id="KW-0648">Protein biosynthesis</keyword>
<keyword id="KW-1185">Reference proteome</keyword>
<gene>
    <name evidence="1" type="primary">prfC</name>
    <name type="ordered locus">LSL_0374</name>
</gene>
<dbReference type="EMBL" id="CP000233">
    <property type="protein sequence ID" value="ABD99187.1"/>
    <property type="molecule type" value="Genomic_DNA"/>
</dbReference>
<dbReference type="RefSeq" id="WP_003704258.1">
    <property type="nucleotide sequence ID" value="NC_007929.1"/>
</dbReference>
<dbReference type="RefSeq" id="YP_535270.1">
    <property type="nucleotide sequence ID" value="NC_007929.1"/>
</dbReference>
<dbReference type="SMR" id="Q1WUZ8"/>
<dbReference type="STRING" id="362948.LSL_0374"/>
<dbReference type="KEGG" id="lsl:LSL_0374"/>
<dbReference type="PATRIC" id="fig|362948.14.peg.450"/>
<dbReference type="HOGENOM" id="CLU_002794_2_1_9"/>
<dbReference type="OrthoDB" id="9804431at2"/>
<dbReference type="Proteomes" id="UP000006559">
    <property type="component" value="Chromosome"/>
</dbReference>
<dbReference type="GO" id="GO:0005829">
    <property type="term" value="C:cytosol"/>
    <property type="evidence" value="ECO:0007669"/>
    <property type="project" value="TreeGrafter"/>
</dbReference>
<dbReference type="GO" id="GO:0005525">
    <property type="term" value="F:GTP binding"/>
    <property type="evidence" value="ECO:0007669"/>
    <property type="project" value="UniProtKB-UniRule"/>
</dbReference>
<dbReference type="GO" id="GO:0003924">
    <property type="term" value="F:GTPase activity"/>
    <property type="evidence" value="ECO:0007669"/>
    <property type="project" value="InterPro"/>
</dbReference>
<dbReference type="GO" id="GO:0016150">
    <property type="term" value="F:translation release factor activity, codon nonspecific"/>
    <property type="evidence" value="ECO:0007669"/>
    <property type="project" value="TreeGrafter"/>
</dbReference>
<dbReference type="GO" id="GO:0016149">
    <property type="term" value="F:translation release factor activity, codon specific"/>
    <property type="evidence" value="ECO:0007669"/>
    <property type="project" value="UniProtKB-UniRule"/>
</dbReference>
<dbReference type="GO" id="GO:0006449">
    <property type="term" value="P:regulation of translational termination"/>
    <property type="evidence" value="ECO:0007669"/>
    <property type="project" value="UniProtKB-UniRule"/>
</dbReference>
<dbReference type="CDD" id="cd04169">
    <property type="entry name" value="RF3"/>
    <property type="match status" value="1"/>
</dbReference>
<dbReference type="CDD" id="cd03689">
    <property type="entry name" value="RF3_II"/>
    <property type="match status" value="1"/>
</dbReference>
<dbReference type="CDD" id="cd16259">
    <property type="entry name" value="RF3_III"/>
    <property type="match status" value="1"/>
</dbReference>
<dbReference type="FunFam" id="2.40.30.10:FF:000040">
    <property type="entry name" value="Peptide chain release factor 3"/>
    <property type="match status" value="1"/>
</dbReference>
<dbReference type="FunFam" id="3.30.70.3280:FF:000001">
    <property type="entry name" value="Peptide chain release factor 3"/>
    <property type="match status" value="1"/>
</dbReference>
<dbReference type="FunFam" id="3.40.50.300:FF:000542">
    <property type="entry name" value="Peptide chain release factor 3"/>
    <property type="match status" value="1"/>
</dbReference>
<dbReference type="Gene3D" id="3.40.50.300">
    <property type="entry name" value="P-loop containing nucleotide triphosphate hydrolases"/>
    <property type="match status" value="1"/>
</dbReference>
<dbReference type="Gene3D" id="3.30.70.3280">
    <property type="entry name" value="Peptide chain release factor 3, domain III"/>
    <property type="match status" value="1"/>
</dbReference>
<dbReference type="Gene3D" id="2.40.30.10">
    <property type="entry name" value="Translation factors"/>
    <property type="match status" value="1"/>
</dbReference>
<dbReference type="HAMAP" id="MF_00072">
    <property type="entry name" value="Rel_fac_3"/>
    <property type="match status" value="1"/>
</dbReference>
<dbReference type="InterPro" id="IPR053905">
    <property type="entry name" value="EF-G-like_DII"/>
</dbReference>
<dbReference type="InterPro" id="IPR035647">
    <property type="entry name" value="EFG_III/V"/>
</dbReference>
<dbReference type="InterPro" id="IPR031157">
    <property type="entry name" value="G_TR_CS"/>
</dbReference>
<dbReference type="InterPro" id="IPR027417">
    <property type="entry name" value="P-loop_NTPase"/>
</dbReference>
<dbReference type="InterPro" id="IPR004548">
    <property type="entry name" value="PrfC"/>
</dbReference>
<dbReference type="InterPro" id="IPR032090">
    <property type="entry name" value="RF3_C"/>
</dbReference>
<dbReference type="InterPro" id="IPR038467">
    <property type="entry name" value="RF3_dom_3_sf"/>
</dbReference>
<dbReference type="InterPro" id="IPR041732">
    <property type="entry name" value="RF3_GTP-bd"/>
</dbReference>
<dbReference type="InterPro" id="IPR005225">
    <property type="entry name" value="Small_GTP-bd"/>
</dbReference>
<dbReference type="InterPro" id="IPR000795">
    <property type="entry name" value="T_Tr_GTP-bd_dom"/>
</dbReference>
<dbReference type="InterPro" id="IPR009000">
    <property type="entry name" value="Transl_B-barrel_sf"/>
</dbReference>
<dbReference type="NCBIfam" id="TIGR00503">
    <property type="entry name" value="prfC"/>
    <property type="match status" value="1"/>
</dbReference>
<dbReference type="NCBIfam" id="NF001964">
    <property type="entry name" value="PRK00741.1"/>
    <property type="match status" value="1"/>
</dbReference>
<dbReference type="NCBIfam" id="TIGR00231">
    <property type="entry name" value="small_GTP"/>
    <property type="match status" value="1"/>
</dbReference>
<dbReference type="PANTHER" id="PTHR43556">
    <property type="entry name" value="PEPTIDE CHAIN RELEASE FACTOR RF3"/>
    <property type="match status" value="1"/>
</dbReference>
<dbReference type="PANTHER" id="PTHR43556:SF2">
    <property type="entry name" value="PEPTIDE CHAIN RELEASE FACTOR RF3"/>
    <property type="match status" value="1"/>
</dbReference>
<dbReference type="Pfam" id="PF22042">
    <property type="entry name" value="EF-G_D2"/>
    <property type="match status" value="1"/>
</dbReference>
<dbReference type="Pfam" id="PF00009">
    <property type="entry name" value="GTP_EFTU"/>
    <property type="match status" value="1"/>
</dbReference>
<dbReference type="Pfam" id="PF16658">
    <property type="entry name" value="RF3_C"/>
    <property type="match status" value="1"/>
</dbReference>
<dbReference type="PRINTS" id="PR00315">
    <property type="entry name" value="ELONGATNFCT"/>
</dbReference>
<dbReference type="SUPFAM" id="SSF54980">
    <property type="entry name" value="EF-G C-terminal domain-like"/>
    <property type="match status" value="1"/>
</dbReference>
<dbReference type="SUPFAM" id="SSF52540">
    <property type="entry name" value="P-loop containing nucleoside triphosphate hydrolases"/>
    <property type="match status" value="1"/>
</dbReference>
<dbReference type="SUPFAM" id="SSF50447">
    <property type="entry name" value="Translation proteins"/>
    <property type="match status" value="1"/>
</dbReference>
<dbReference type="PROSITE" id="PS00301">
    <property type="entry name" value="G_TR_1"/>
    <property type="match status" value="1"/>
</dbReference>
<dbReference type="PROSITE" id="PS51722">
    <property type="entry name" value="G_TR_2"/>
    <property type="match status" value="1"/>
</dbReference>
<accession>Q1WUZ8</accession>
<organism>
    <name type="scientific">Ligilactobacillus salivarius (strain UCC118)</name>
    <name type="common">Lactobacillus salivarius</name>
    <dbReference type="NCBI Taxonomy" id="362948"/>
    <lineage>
        <taxon>Bacteria</taxon>
        <taxon>Bacillati</taxon>
        <taxon>Bacillota</taxon>
        <taxon>Bacilli</taxon>
        <taxon>Lactobacillales</taxon>
        <taxon>Lactobacillaceae</taxon>
        <taxon>Ligilactobacillus</taxon>
    </lineage>
</organism>
<sequence length="525" mass="59552">MDKKQLEESVNNRRTFAIISHPDAGKTTITEQLLLFGGVVRKAGTVKAKKSGNFAKSDWMEIEKKRGISVTSSVMQFDYAGKRVNILDTPGHEDFSEDTYRTLMAVDSAVMVIDSAKGIEPQTKKLFQVCRMRGIPIFTFINKLDRDGREPLDLTAELEDVLGIESYAMNWPIGMGKGLKGLYDIYNHRIELYRSEDEGQAFLELDDNGEIKGDNPLKDESIYKQVLEEIELIEGAGSEFDEEKIAKGELTPVFFGSALTNFGVKTFLDAYLKYAPKPAAHKTEDGSEVEPDRKDFSGFIFKIQANMNPNHRDRIAFVRICSGEFDRGMDVFLERTGKKLRLSNSTQFMADTRETLETAVAGDIIGLYDTGNFQIGDSIYTGKKAVKFEKLPQFTPELFMRVTAKNVMKQKSFHKGIQQLVQEGAVQLYQSYSTGDYILGAVGQLQFEVFQFRMANEYNSEVVMTPMGHKIARWIDPEQLDEKMSSSRNLLVKDRAGMPLFLFENEFAERWFMDKYPDVKLTAKL</sequence>